<accession>P23759</accession>
<accession>E9PFV9</accession>
<accession>Q0VA99</accession>
<accession>Q2PJS5</accession>
<evidence type="ECO:0000250" key="1">
    <source>
        <dbReference type="UniProtKB" id="P47239"/>
    </source>
</evidence>
<evidence type="ECO:0000255" key="2">
    <source>
        <dbReference type="PROSITE-ProRule" id="PRU00108"/>
    </source>
</evidence>
<evidence type="ECO:0000255" key="3">
    <source>
        <dbReference type="PROSITE-ProRule" id="PRU00138"/>
    </source>
</evidence>
<evidence type="ECO:0000255" key="4">
    <source>
        <dbReference type="PROSITE-ProRule" id="PRU00381"/>
    </source>
</evidence>
<evidence type="ECO:0000256" key="5">
    <source>
        <dbReference type="SAM" id="MobiDB-lite"/>
    </source>
</evidence>
<evidence type="ECO:0000269" key="6">
    <source>
    </source>
</evidence>
<evidence type="ECO:0000269" key="7">
    <source>
    </source>
</evidence>
<evidence type="ECO:0000269" key="8">
    <source>
    </source>
</evidence>
<evidence type="ECO:0000303" key="9">
    <source>
    </source>
</evidence>
<evidence type="ECO:0000303" key="10">
    <source>
    </source>
</evidence>
<evidence type="ECO:0000305" key="11"/>
<feature type="chain" id="PRO_0000050194" description="Paired box protein Pax-7">
    <location>
        <begin position="1"/>
        <end position="505"/>
    </location>
</feature>
<feature type="DNA-binding region" description="Paired" evidence="4">
    <location>
        <begin position="34"/>
        <end position="163"/>
    </location>
</feature>
<feature type="DNA-binding region" description="Homeobox" evidence="2">
    <location>
        <begin position="217"/>
        <end position="276"/>
    </location>
</feature>
<feature type="region of interest" description="Sufficient to mediate interaction with PAXBP1" evidence="1">
    <location>
        <begin position="27"/>
        <end position="210"/>
    </location>
</feature>
<feature type="region of interest" description="PAI subdomain" evidence="4">
    <location>
        <begin position="37"/>
        <end position="93"/>
    </location>
</feature>
<feature type="region of interest" description="RED subdomain" evidence="4">
    <location>
        <begin position="113"/>
        <end position="163"/>
    </location>
</feature>
<feature type="region of interest" description="Disordered" evidence="5">
    <location>
        <begin position="167"/>
        <end position="224"/>
    </location>
</feature>
<feature type="region of interest" description="Disordered" evidence="5">
    <location>
        <begin position="389"/>
        <end position="409"/>
    </location>
</feature>
<feature type="short sequence motif" description="OAR" evidence="3">
    <location>
        <begin position="479"/>
        <end position="491"/>
    </location>
</feature>
<feature type="compositionally biased region" description="Basic and acidic residues" evidence="5">
    <location>
        <begin position="167"/>
        <end position="188"/>
    </location>
</feature>
<feature type="modified residue" description="N6-acetyllysine" evidence="1">
    <location>
        <position position="105"/>
    </location>
</feature>
<feature type="modified residue" description="N6-acetyllysine" evidence="1">
    <location>
        <position position="139"/>
    </location>
</feature>
<feature type="splice variant" id="VSP_057678" description="In isoform 2." evidence="9">
    <location>
        <begin position="151"/>
        <end position="152"/>
    </location>
</feature>
<feature type="splice variant" id="VSP_057679" description="In isoform 1 and isoform 2." evidence="9 10">
    <original>TAVDYLAKNVSLSTQRRMKLGEHSAVLGLLPVETGQAY</original>
    <variation>SECLVPWASPVPIPSPTPRASCLFMESYKVVSGWGMSISQMEKLKSSQMEQFT</variation>
    <location>
        <begin position="468"/>
        <end position="505"/>
    </location>
</feature>
<feature type="sequence variant" id="VAR_083265" description="In CMYO19; dbSNP:rs1392068839." evidence="7">
    <original>R</original>
    <variation>C</variation>
    <location>
        <position position="56"/>
    </location>
</feature>
<feature type="sequence variant" id="VAR_083266" description="In CMYO19." evidence="7">
    <location>
        <begin position="74"/>
        <end position="505"/>
    </location>
</feature>
<feature type="sequence variant" id="VAR_083267" description="In CMYO19; loss-of-function variant resulting in a reduced muscle stem cell pool; the protein is not detected in patient muscle." evidence="7">
    <location>
        <begin position="145"/>
        <end position="505"/>
    </location>
</feature>
<feature type="sequence conflict" description="In Ref. 2; ABC48797." evidence="11" ref="2">
    <original>T</original>
    <variation>S</variation>
    <location>
        <position position="468"/>
    </location>
</feature>
<comment type="function">
    <text evidence="7">Transcription factor that is involved in the regulation of muscle stem cells proliferation, playing a role in myogenesis and muscle regeneration.</text>
</comment>
<comment type="subunit">
    <text evidence="1 6">Can bind to DNA as a heterodimer with PAX3. Interacts with PAXBP1; the interaction links PAX7 to a WDR5-containing histone methyltransferase complex (By similarity). Interacts with DAXX (PubMed:10393185).</text>
</comment>
<comment type="interaction">
    <interactant intactId="EBI-12859446">
        <id>P23759-2</id>
    </interactant>
    <interactant intactId="EBI-8643161">
        <id>Q9NX04</id>
        <label>AIRIM</label>
    </interactant>
    <organismsDiffer>false</organismsDiffer>
    <experiments>3</experiments>
</comment>
<comment type="interaction">
    <interactant intactId="EBI-12859446">
        <id>P23759-2</id>
    </interactant>
    <interactant intactId="EBI-372594">
        <id>Q99828</id>
        <label>CIB1</label>
    </interactant>
    <organismsDiffer>false</organismsDiffer>
    <experiments>3</experiments>
</comment>
<comment type="interaction">
    <interactant intactId="EBI-12859446">
        <id>P23759-2</id>
    </interactant>
    <interactant intactId="EBI-6873363">
        <id>Q8WUE5</id>
        <label>CT55</label>
    </interactant>
    <organismsDiffer>false</organismsDiffer>
    <experiments>3</experiments>
</comment>
<comment type="interaction">
    <interactant intactId="EBI-12859446">
        <id>P23759-2</id>
    </interactant>
    <interactant intactId="EBI-748420">
        <id>Q9NSC5</id>
        <label>HOMER3</label>
    </interactant>
    <organismsDiffer>false</organismsDiffer>
    <experiments>3</experiments>
</comment>
<comment type="interaction">
    <interactant intactId="EBI-12859446">
        <id>P23759-2</id>
    </interactant>
    <interactant intactId="EBI-10241353">
        <id>Q3SYF9</id>
        <label>KRTAP19-7</label>
    </interactant>
    <organismsDiffer>false</organismsDiffer>
    <experiments>3</experiments>
</comment>
<comment type="interaction">
    <interactant intactId="EBI-12859446">
        <id>P23759-2</id>
    </interactant>
    <interactant intactId="EBI-746778">
        <id>Q96A72</id>
        <label>MAGOHB</label>
    </interactant>
    <organismsDiffer>false</organismsDiffer>
    <experiments>3</experiments>
</comment>
<comment type="subcellular location">
    <subcellularLocation>
        <location evidence="1">Nucleus</location>
    </subcellularLocation>
</comment>
<comment type="alternative products">
    <event type="alternative splicing"/>
    <isoform>
        <id>P23759-3</id>
        <name>3</name>
        <sequence type="displayed"/>
    </isoform>
    <isoform>
        <id>P23759-1</id>
        <name>1</name>
        <name>Long</name>
        <sequence type="described" ref="VSP_057679"/>
    </isoform>
    <isoform>
        <id>P23759-2</id>
        <name>2</name>
        <name>Short</name>
        <sequence type="described" ref="VSP_057678 VSP_057679"/>
    </isoform>
</comment>
<comment type="PTM">
    <text evidence="1">Acetylation at Lys-105 and Lys-139 by KAT8 is required for high-level transcription factor activity. Deacetylated by SIRT2.</text>
</comment>
<comment type="disease" evidence="8">
    <disease id="DI-02699">
        <name>Rhabdomyosarcoma 2</name>
        <acronym>RMS2</acronym>
        <description>A form of rhabdomyosarcoma, a highly malignant tumor of striated muscle derived from primitive mesenchymal cells and exhibiting differentiation along rhabdomyoblastic lines. Rhabdomyosarcoma is one of the most frequently occurring soft tissue sarcomas and the most common in children. It occurs in four forms: alveolar, pleomorphic, embryonal and botryoidal rhabdomyosarcomas.</description>
        <dbReference type="MIM" id="268220"/>
    </disease>
    <text evidence="8">The gene represented in this entry is involved in disease pathogenesis. A chromosomal aberration involving PAX7 is found in rhabdomyosarcoma. Translocation t(1;13)(p36;q14) with FOXO1. The resulting protein is a transcriptional activator.</text>
</comment>
<comment type="disease" evidence="7">
    <disease id="DI-05660">
        <name>Congenital myopathy 19</name>
        <acronym>CMYO19</acronym>
        <description>An autosomal recessive muscular disorder characterized by infantile onset of progressive muscular atrophy, hypotonia, ptosis, scoliosis and dysmorphic facial features. Disease severity is variable, ranging from mild to severe.</description>
        <dbReference type="MIM" id="618578"/>
    </disease>
    <text>The disease is caused by variants affecting the gene represented in this entry.</text>
</comment>
<comment type="similarity">
    <text evidence="11">Belongs to the paired homeobox family.</text>
</comment>
<gene>
    <name type="primary">PAX7</name>
    <name type="synonym">HUP1</name>
</gene>
<proteinExistence type="evidence at protein level"/>
<sequence length="505" mass="55119">MAALPGTVPRMMRPAPGQNYPRTGFPLEVSTPLGQGRVNQLGGVFINGRPLPNHIRHKIVEMAHHGIRPCVISRQLRVSHGCVSKILCRYQETGSIRPGAIGGSKPRQVATPDVEKKIEEYKRENPGMFSWEIRDRLLKDGHCDRSTVPSGLVSSISRVLRIKFGKKEEEDEADKKEDDGEKKAKHSIDGILGDKGNRLDEGSDVESEPDLPLKRKQRRSRTTFTAEQLEELEKAFERTHYPDIYTREELAQRTKLTEARVQVWFSNRRARWRKQAGANQLAAFNHLLPGGFPPTGMPTLPPYQLPDSTYPTTTISQDGGSTVHRPQPLPPSTMHQGGLAAAAAAADTSSAYGARHSFSSYSDSFMNPAAPSNHMNPVSNGLSPQVMSILGNPSAVPPQPQADFSISPLHGGLDSATSISASCSQRADSIKPGDSLPTSQAYCPPTYSTTGYSVDPVAGYQYGQYGQTAVDYLAKNVSLSTQRRMKLGEHSAVLGLLPVETGQAY</sequence>
<reference key="1">
    <citation type="journal article" date="1997" name="Genomics">
        <title>The genomic organization and the full coding region of the human PAX7 gene.</title>
        <authorList>
            <person name="Vorobyov E."/>
            <person name="Mertsalov I."/>
            <person name="Dockhorn-Dworniczak B."/>
            <person name="Dworniczak B."/>
            <person name="Horst J."/>
        </authorList>
    </citation>
    <scope>NUCLEOTIDE SEQUENCE [GENOMIC DNA / MRNA] (ISOFORMS 1 AND 2)</scope>
</reference>
<reference key="2">
    <citation type="journal article" date="2006" name="J. Mol. Evol.">
        <title>Getting the proto-Pax by the tail.</title>
        <authorList>
            <person name="Vorobyov E."/>
            <person name="Horst J."/>
        </authorList>
    </citation>
    <scope>NUCLEOTIDE SEQUENCE [MRNA] (ISOFORM 3)</scope>
</reference>
<reference key="3">
    <citation type="journal article" date="2006" name="Nature">
        <title>The DNA sequence and biological annotation of human chromosome 1.</title>
        <authorList>
            <person name="Gregory S.G."/>
            <person name="Barlow K.F."/>
            <person name="McLay K.E."/>
            <person name="Kaul R."/>
            <person name="Swarbreck D."/>
            <person name="Dunham A."/>
            <person name="Scott C.E."/>
            <person name="Howe K.L."/>
            <person name="Woodfine K."/>
            <person name="Spencer C.C.A."/>
            <person name="Jones M.C."/>
            <person name="Gillson C."/>
            <person name="Searle S."/>
            <person name="Zhou Y."/>
            <person name="Kokocinski F."/>
            <person name="McDonald L."/>
            <person name="Evans R."/>
            <person name="Phillips K."/>
            <person name="Atkinson A."/>
            <person name="Cooper R."/>
            <person name="Jones C."/>
            <person name="Hall R.E."/>
            <person name="Andrews T.D."/>
            <person name="Lloyd C."/>
            <person name="Ainscough R."/>
            <person name="Almeida J.P."/>
            <person name="Ambrose K.D."/>
            <person name="Anderson F."/>
            <person name="Andrew R.W."/>
            <person name="Ashwell R.I.S."/>
            <person name="Aubin K."/>
            <person name="Babbage A.K."/>
            <person name="Bagguley C.L."/>
            <person name="Bailey J."/>
            <person name="Beasley H."/>
            <person name="Bethel G."/>
            <person name="Bird C.P."/>
            <person name="Bray-Allen S."/>
            <person name="Brown J.Y."/>
            <person name="Brown A.J."/>
            <person name="Buckley D."/>
            <person name="Burton J."/>
            <person name="Bye J."/>
            <person name="Carder C."/>
            <person name="Chapman J.C."/>
            <person name="Clark S.Y."/>
            <person name="Clarke G."/>
            <person name="Clee C."/>
            <person name="Cobley V."/>
            <person name="Collier R.E."/>
            <person name="Corby N."/>
            <person name="Coville G.J."/>
            <person name="Davies J."/>
            <person name="Deadman R."/>
            <person name="Dunn M."/>
            <person name="Earthrowl M."/>
            <person name="Ellington A.G."/>
            <person name="Errington H."/>
            <person name="Frankish A."/>
            <person name="Frankland J."/>
            <person name="French L."/>
            <person name="Garner P."/>
            <person name="Garnett J."/>
            <person name="Gay L."/>
            <person name="Ghori M.R.J."/>
            <person name="Gibson R."/>
            <person name="Gilby L.M."/>
            <person name="Gillett W."/>
            <person name="Glithero R.J."/>
            <person name="Grafham D.V."/>
            <person name="Griffiths C."/>
            <person name="Griffiths-Jones S."/>
            <person name="Grocock R."/>
            <person name="Hammond S."/>
            <person name="Harrison E.S.I."/>
            <person name="Hart E."/>
            <person name="Haugen E."/>
            <person name="Heath P.D."/>
            <person name="Holmes S."/>
            <person name="Holt K."/>
            <person name="Howden P.J."/>
            <person name="Hunt A.R."/>
            <person name="Hunt S.E."/>
            <person name="Hunter G."/>
            <person name="Isherwood J."/>
            <person name="James R."/>
            <person name="Johnson C."/>
            <person name="Johnson D."/>
            <person name="Joy A."/>
            <person name="Kay M."/>
            <person name="Kershaw J.K."/>
            <person name="Kibukawa M."/>
            <person name="Kimberley A.M."/>
            <person name="King A."/>
            <person name="Knights A.J."/>
            <person name="Lad H."/>
            <person name="Laird G."/>
            <person name="Lawlor S."/>
            <person name="Leongamornlert D.A."/>
            <person name="Lloyd D.M."/>
            <person name="Loveland J."/>
            <person name="Lovell J."/>
            <person name="Lush M.J."/>
            <person name="Lyne R."/>
            <person name="Martin S."/>
            <person name="Mashreghi-Mohammadi M."/>
            <person name="Matthews L."/>
            <person name="Matthews N.S.W."/>
            <person name="McLaren S."/>
            <person name="Milne S."/>
            <person name="Mistry S."/>
            <person name="Moore M.J.F."/>
            <person name="Nickerson T."/>
            <person name="O'Dell C.N."/>
            <person name="Oliver K."/>
            <person name="Palmeiri A."/>
            <person name="Palmer S.A."/>
            <person name="Parker A."/>
            <person name="Patel D."/>
            <person name="Pearce A.V."/>
            <person name="Peck A.I."/>
            <person name="Pelan S."/>
            <person name="Phelps K."/>
            <person name="Phillimore B.J."/>
            <person name="Plumb R."/>
            <person name="Rajan J."/>
            <person name="Raymond C."/>
            <person name="Rouse G."/>
            <person name="Saenphimmachak C."/>
            <person name="Sehra H.K."/>
            <person name="Sheridan E."/>
            <person name="Shownkeen R."/>
            <person name="Sims S."/>
            <person name="Skuce C.D."/>
            <person name="Smith M."/>
            <person name="Steward C."/>
            <person name="Subramanian S."/>
            <person name="Sycamore N."/>
            <person name="Tracey A."/>
            <person name="Tromans A."/>
            <person name="Van Helmond Z."/>
            <person name="Wall M."/>
            <person name="Wallis J.M."/>
            <person name="White S."/>
            <person name="Whitehead S.L."/>
            <person name="Wilkinson J.E."/>
            <person name="Willey D.L."/>
            <person name="Williams H."/>
            <person name="Wilming L."/>
            <person name="Wray P.W."/>
            <person name="Wu Z."/>
            <person name="Coulson A."/>
            <person name="Vaudin M."/>
            <person name="Sulston J.E."/>
            <person name="Durbin R.M."/>
            <person name="Hubbard T."/>
            <person name="Wooster R."/>
            <person name="Dunham I."/>
            <person name="Carter N.P."/>
            <person name="McVean G."/>
            <person name="Ross M.T."/>
            <person name="Harrow J."/>
            <person name="Olson M.V."/>
            <person name="Beck S."/>
            <person name="Rogers J."/>
            <person name="Bentley D.R."/>
        </authorList>
    </citation>
    <scope>NUCLEOTIDE SEQUENCE [LARGE SCALE GENOMIC DNA]</scope>
</reference>
<reference key="4">
    <citation type="submission" date="2005-07" db="EMBL/GenBank/DDBJ databases">
        <authorList>
            <person name="Mural R.J."/>
            <person name="Istrail S."/>
            <person name="Sutton G.G."/>
            <person name="Florea L."/>
            <person name="Halpern A.L."/>
            <person name="Mobarry C.M."/>
            <person name="Lippert R."/>
            <person name="Walenz B."/>
            <person name="Shatkay H."/>
            <person name="Dew I."/>
            <person name="Miller J.R."/>
            <person name="Flanigan M.J."/>
            <person name="Edwards N.J."/>
            <person name="Bolanos R."/>
            <person name="Fasulo D."/>
            <person name="Halldorsson B.V."/>
            <person name="Hannenhalli S."/>
            <person name="Turner R."/>
            <person name="Yooseph S."/>
            <person name="Lu F."/>
            <person name="Nusskern D.R."/>
            <person name="Shue B.C."/>
            <person name="Zheng X.H."/>
            <person name="Zhong F."/>
            <person name="Delcher A.L."/>
            <person name="Huson D.H."/>
            <person name="Kravitz S.A."/>
            <person name="Mouchard L."/>
            <person name="Reinert K."/>
            <person name="Remington K.A."/>
            <person name="Clark A.G."/>
            <person name="Waterman M.S."/>
            <person name="Eichler E.E."/>
            <person name="Adams M.D."/>
            <person name="Hunkapiller M.W."/>
            <person name="Myers E.W."/>
            <person name="Venter J.C."/>
        </authorList>
    </citation>
    <scope>NUCLEOTIDE SEQUENCE [LARGE SCALE GENOMIC DNA]</scope>
</reference>
<reference key="5">
    <citation type="journal article" date="2004" name="Genome Res.">
        <title>The status, quality, and expansion of the NIH full-length cDNA project: the Mammalian Gene Collection (MGC).</title>
        <authorList>
            <consortium name="The MGC Project Team"/>
        </authorList>
    </citation>
    <scope>NUCLEOTIDE SEQUENCE [LARGE SCALE MRNA] (ISOFORM 2)</scope>
</reference>
<reference key="6">
    <citation type="journal article" date="1994" name="Nucleic Acids Res.">
        <title>Molecular cloning and characterization of a human PAX-7 cDNA expressed in normal and neoplastic myocytes.</title>
        <authorList>
            <person name="Schaefer B.W."/>
            <person name="Czerny T."/>
            <person name="Bernasconi M."/>
            <person name="Genini M."/>
            <person name="Busslinger M."/>
        </authorList>
    </citation>
    <scope>NUCLEOTIDE SEQUENCE [MRNA] OF 1-467 (ISOFORMS 1/3)</scope>
</reference>
<reference key="7">
    <citation type="journal article" date="1989" name="EMBO J.">
        <title>Conservation of the paired domain in metazoans and its structure in three isolated human genes.</title>
        <authorList>
            <person name="Burri M."/>
            <person name="Tromvoukis Y."/>
            <person name="Bopp D."/>
            <person name="Frigerio G."/>
            <person name="Noll M."/>
        </authorList>
    </citation>
    <scope>NUCLEOTIDE SEQUENCE [GENOMIC DNA] OF 30-195 (ISOFORM 2)</scope>
</reference>
<reference key="8">
    <citation type="journal article" date="1994" name="Cancer Res.">
        <title>Fusion of PAX7 to FKHR by the variant t(1;13)(p36;q14) translocation in alveolar rhabdomyosarcoma.</title>
        <authorList>
            <person name="Davis R.J."/>
            <person name="D'Cruz C.M."/>
            <person name="Lovell M.A."/>
            <person name="Biegel J.A."/>
            <person name="Barr F.G."/>
        </authorList>
    </citation>
    <scope>INVOLVEMENT IN RMS2</scope>
    <scope>CHROMOSOMAL TRANSLOCATION WITH FOXO1</scope>
</reference>
<reference key="9">
    <citation type="journal article" date="1999" name="EMBO J.">
        <title>The Pax3-FKHR oncoprotein is unresponsive to the Pax3-associated repressor hDaxx.</title>
        <authorList>
            <person name="Hollenbach A.D."/>
            <person name="Sublett J.E."/>
            <person name="McPherson C.J."/>
            <person name="Grosveld G."/>
        </authorList>
    </citation>
    <scope>INTERACTION WITH DAXX</scope>
</reference>
<reference key="10">
    <citation type="journal article" date="2019" name="Genet. Med.">
        <title>Biallelic variants in the transcription factor PAX7 are a new genetic cause of myopathy.</title>
        <authorList>
            <person name="Feichtinger R.G."/>
            <person name="Mucha B.E."/>
            <person name="Hengel H."/>
            <person name="Orfi Z."/>
            <person name="Makowski C."/>
            <person name="Dort J."/>
            <person name="D'Anjou G."/>
            <person name="Nguyen T.T.M."/>
            <person name="Buchert R."/>
            <person name="Juenger H."/>
            <person name="Freisinger P."/>
            <person name="Baumeister S."/>
            <person name="Schoser B."/>
            <person name="Ahting U."/>
            <person name="Keimer R."/>
            <person name="Nguyen C.E."/>
            <person name="Fabre P."/>
            <person name="Gauthier J."/>
            <person name="Miguet M."/>
            <person name="Lopes F."/>
            <person name="AlHakeem A."/>
            <person name="AlHashem A."/>
            <person name="Tabarki B."/>
            <person name="Kandaswamy K.K."/>
            <person name="Bauer P."/>
            <person name="Steinbacher P."/>
            <person name="Prokisch H."/>
            <person name="Sturm M."/>
            <person name="Strom T.M."/>
            <person name="Ellezam B."/>
            <person name="Mayr J.A."/>
            <person name="Schoels L."/>
            <person name="Michaud J.L."/>
            <person name="Campeau P.M."/>
            <person name="Haack T.B."/>
            <person name="Dumont N.A."/>
        </authorList>
    </citation>
    <scope>FUNCTION</scope>
    <scope>VARIANTS CMYO19 CYS-56; 74-ARG--TYR-505 DEL AND 145-ARG--TYR-505 DEL</scope>
    <scope>CHARACTERIZATION OF VARIANT CMYO19 145-ARG--TYR-505 DEL</scope>
</reference>
<organism>
    <name type="scientific">Homo sapiens</name>
    <name type="common">Human</name>
    <dbReference type="NCBI Taxonomy" id="9606"/>
    <lineage>
        <taxon>Eukaryota</taxon>
        <taxon>Metazoa</taxon>
        <taxon>Chordata</taxon>
        <taxon>Craniata</taxon>
        <taxon>Vertebrata</taxon>
        <taxon>Euteleostomi</taxon>
        <taxon>Mammalia</taxon>
        <taxon>Eutheria</taxon>
        <taxon>Euarchontoglires</taxon>
        <taxon>Primates</taxon>
        <taxon>Haplorrhini</taxon>
        <taxon>Catarrhini</taxon>
        <taxon>Hominidae</taxon>
        <taxon>Homo</taxon>
    </lineage>
</organism>
<name>PAX7_HUMAN</name>
<dbReference type="EMBL" id="X96743">
    <property type="protein sequence ID" value="CAA65520.1"/>
    <property type="molecule type" value="mRNA"/>
</dbReference>
<dbReference type="EMBL" id="X96744">
    <property type="protein sequence ID" value="CAA65521.1"/>
    <property type="molecule type" value="Genomic_DNA"/>
</dbReference>
<dbReference type="EMBL" id="X15042">
    <property type="protein sequence ID" value="CAA65521.1"/>
    <property type="status" value="JOINED"/>
    <property type="molecule type" value="Genomic_DNA"/>
</dbReference>
<dbReference type="EMBL" id="X15250">
    <property type="protein sequence ID" value="CAA65521.1"/>
    <property type="status" value="JOINED"/>
    <property type="molecule type" value="Genomic_DNA"/>
</dbReference>
<dbReference type="EMBL" id="X15251">
    <property type="protein sequence ID" value="CAA65521.1"/>
    <property type="status" value="JOINED"/>
    <property type="molecule type" value="Genomic_DNA"/>
</dbReference>
<dbReference type="EMBL" id="X96745">
    <property type="protein sequence ID" value="CAA65521.1"/>
    <property type="status" value="JOINED"/>
    <property type="molecule type" value="Genomic_DNA"/>
</dbReference>
<dbReference type="EMBL" id="X96746">
    <property type="protein sequence ID" value="CAA65521.1"/>
    <property type="status" value="JOINED"/>
    <property type="molecule type" value="Genomic_DNA"/>
</dbReference>
<dbReference type="EMBL" id="X96747">
    <property type="protein sequence ID" value="CAA65521.1"/>
    <property type="status" value="JOINED"/>
    <property type="molecule type" value="Genomic_DNA"/>
</dbReference>
<dbReference type="EMBL" id="X96748">
    <property type="protein sequence ID" value="CAA65521.1"/>
    <property type="status" value="JOINED"/>
    <property type="molecule type" value="Genomic_DNA"/>
</dbReference>
<dbReference type="EMBL" id="X96744">
    <property type="protein sequence ID" value="CAA65522.1"/>
    <property type="molecule type" value="Genomic_DNA"/>
</dbReference>
<dbReference type="EMBL" id="X15042">
    <property type="protein sequence ID" value="CAA65522.1"/>
    <property type="status" value="JOINED"/>
    <property type="molecule type" value="Genomic_DNA"/>
</dbReference>
<dbReference type="EMBL" id="X15250">
    <property type="protein sequence ID" value="CAA65522.1"/>
    <property type="status" value="JOINED"/>
    <property type="molecule type" value="Genomic_DNA"/>
</dbReference>
<dbReference type="EMBL" id="X15251">
    <property type="protein sequence ID" value="CAA65522.1"/>
    <property type="status" value="JOINED"/>
    <property type="molecule type" value="Genomic_DNA"/>
</dbReference>
<dbReference type="EMBL" id="X96745">
    <property type="protein sequence ID" value="CAA65522.1"/>
    <property type="status" value="JOINED"/>
    <property type="molecule type" value="Genomic_DNA"/>
</dbReference>
<dbReference type="EMBL" id="X96746">
    <property type="protein sequence ID" value="CAA65522.1"/>
    <property type="status" value="JOINED"/>
    <property type="molecule type" value="Genomic_DNA"/>
</dbReference>
<dbReference type="EMBL" id="X96747">
    <property type="protein sequence ID" value="CAA65522.1"/>
    <property type="status" value="JOINED"/>
    <property type="molecule type" value="Genomic_DNA"/>
</dbReference>
<dbReference type="EMBL" id="X96748">
    <property type="protein sequence ID" value="CAA65522.1"/>
    <property type="status" value="JOINED"/>
    <property type="molecule type" value="Genomic_DNA"/>
</dbReference>
<dbReference type="EMBL" id="DQ322591">
    <property type="protein sequence ID" value="ABC48797.1"/>
    <property type="molecule type" value="mRNA"/>
</dbReference>
<dbReference type="EMBL" id="AL021528">
    <property type="status" value="NOT_ANNOTATED_CDS"/>
    <property type="molecule type" value="Genomic_DNA"/>
</dbReference>
<dbReference type="EMBL" id="CH471134">
    <property type="protein sequence ID" value="EAW94853.1"/>
    <property type="molecule type" value="Genomic_DNA"/>
</dbReference>
<dbReference type="EMBL" id="BC121165">
    <property type="protein sequence ID" value="AAI21166.1"/>
    <property type="molecule type" value="mRNA"/>
</dbReference>
<dbReference type="EMBL" id="BC121166">
    <property type="protein sequence ID" value="AAI21167.1"/>
    <property type="molecule type" value="mRNA"/>
</dbReference>
<dbReference type="EMBL" id="Z35141">
    <property type="protein sequence ID" value="CAA84513.1"/>
    <property type="molecule type" value="mRNA"/>
</dbReference>
<dbReference type="CCDS" id="CCDS186.1">
    <molecule id="P23759-1"/>
</dbReference>
<dbReference type="CCDS" id="CCDS44074.1">
    <molecule id="P23759-3"/>
</dbReference>
<dbReference type="CCDS" id="CCDS44075.1">
    <molecule id="P23759-2"/>
</dbReference>
<dbReference type="PIR" id="S78502">
    <property type="entry name" value="S78502"/>
</dbReference>
<dbReference type="RefSeq" id="NP_001128726.1">
    <molecule id="P23759-3"/>
    <property type="nucleotide sequence ID" value="NM_001135254.2"/>
</dbReference>
<dbReference type="RefSeq" id="NP_002575.1">
    <molecule id="P23759-1"/>
    <property type="nucleotide sequence ID" value="NM_002584.3"/>
</dbReference>
<dbReference type="RefSeq" id="NP_039236.1">
    <molecule id="P23759-2"/>
    <property type="nucleotide sequence ID" value="NM_013945.3"/>
</dbReference>
<dbReference type="SMR" id="P23759"/>
<dbReference type="BioGRID" id="111115">
    <property type="interactions" value="124"/>
</dbReference>
<dbReference type="FunCoup" id="P23759">
    <property type="interactions" value="221"/>
</dbReference>
<dbReference type="IntAct" id="P23759">
    <property type="interactions" value="120"/>
</dbReference>
<dbReference type="MINT" id="P23759"/>
<dbReference type="STRING" id="9606.ENSP00000364524"/>
<dbReference type="GlyGen" id="P23759">
    <property type="glycosylation" value="1 site, 1 O-linked glycan (1 site)"/>
</dbReference>
<dbReference type="iPTMnet" id="P23759"/>
<dbReference type="PhosphoSitePlus" id="P23759"/>
<dbReference type="BioMuta" id="PAX7"/>
<dbReference type="DMDM" id="8247951"/>
<dbReference type="jPOST" id="P23759"/>
<dbReference type="MassIVE" id="P23759"/>
<dbReference type="PaxDb" id="9606-ENSP00000364524"/>
<dbReference type="PeptideAtlas" id="P23759"/>
<dbReference type="ProteomicsDB" id="54149">
    <molecule id="P23759-2"/>
</dbReference>
<dbReference type="Antibodypedia" id="14724">
    <property type="antibodies" value="756 antibodies from 41 providers"/>
</dbReference>
<dbReference type="DNASU" id="5081"/>
<dbReference type="Ensembl" id="ENST00000375375.7">
    <molecule id="P23759-1"/>
    <property type="protein sequence ID" value="ENSP00000364524.3"/>
    <property type="gene ID" value="ENSG00000009709.13"/>
</dbReference>
<dbReference type="Ensembl" id="ENST00000400661.3">
    <molecule id="P23759-2"/>
    <property type="protein sequence ID" value="ENSP00000383502.3"/>
    <property type="gene ID" value="ENSG00000009709.13"/>
</dbReference>
<dbReference type="Ensembl" id="ENST00000420770.7">
    <molecule id="P23759-3"/>
    <property type="protein sequence ID" value="ENSP00000403389.2"/>
    <property type="gene ID" value="ENSG00000009709.13"/>
</dbReference>
<dbReference type="GeneID" id="5081"/>
<dbReference type="KEGG" id="hsa:5081"/>
<dbReference type="MANE-Select" id="ENST00000420770.7">
    <property type="protein sequence ID" value="ENSP00000403389.2"/>
    <property type="RefSeq nucleotide sequence ID" value="NM_001135254.2"/>
    <property type="RefSeq protein sequence ID" value="NP_001128726.1"/>
</dbReference>
<dbReference type="UCSC" id="uc001bay.3">
    <molecule id="P23759-3"/>
    <property type="organism name" value="human"/>
</dbReference>
<dbReference type="AGR" id="HGNC:8621"/>
<dbReference type="CTD" id="5081"/>
<dbReference type="DisGeNET" id="5081"/>
<dbReference type="GeneCards" id="PAX7"/>
<dbReference type="HGNC" id="HGNC:8621">
    <property type="gene designation" value="PAX7"/>
</dbReference>
<dbReference type="HPA" id="ENSG00000009709">
    <property type="expression patterns" value="Tissue enhanced (skeletal muscle, tongue)"/>
</dbReference>
<dbReference type="MalaCards" id="PAX7"/>
<dbReference type="MIM" id="167410">
    <property type="type" value="gene"/>
</dbReference>
<dbReference type="MIM" id="268220">
    <property type="type" value="phenotype"/>
</dbReference>
<dbReference type="MIM" id="618578">
    <property type="type" value="phenotype"/>
</dbReference>
<dbReference type="neXtProt" id="NX_P23759"/>
<dbReference type="OpenTargets" id="ENSG00000009709"/>
<dbReference type="Orphanet" id="99756">
    <property type="disease" value="Alveolar rhabdomyosarcoma"/>
</dbReference>
<dbReference type="PharmGKB" id="PA32961"/>
<dbReference type="VEuPathDB" id="HostDB:ENSG00000009709"/>
<dbReference type="eggNOG" id="KOG0849">
    <property type="taxonomic scope" value="Eukaryota"/>
</dbReference>
<dbReference type="GeneTree" id="ENSGT00940000156759"/>
<dbReference type="HOGENOM" id="CLU_019281_8_0_1"/>
<dbReference type="InParanoid" id="P23759"/>
<dbReference type="OMA" id="SECLAPW"/>
<dbReference type="OrthoDB" id="6159439at2759"/>
<dbReference type="PAN-GO" id="P23759">
    <property type="GO annotations" value="4 GO annotations based on evolutionary models"/>
</dbReference>
<dbReference type="TreeFam" id="TF351610"/>
<dbReference type="PathwayCommons" id="P23759"/>
<dbReference type="Reactome" id="R-HSA-9834899">
    <property type="pathway name" value="Specification of the neural plate border"/>
</dbReference>
<dbReference type="SignaLink" id="P23759"/>
<dbReference type="SIGNOR" id="P23759"/>
<dbReference type="BioGRID-ORCS" id="5081">
    <property type="hits" value="18 hits in 1175 CRISPR screens"/>
</dbReference>
<dbReference type="ChiTaRS" id="PAX7">
    <property type="organism name" value="human"/>
</dbReference>
<dbReference type="GeneWiki" id="PAX7"/>
<dbReference type="GenomeRNAi" id="5081"/>
<dbReference type="Pharos" id="P23759">
    <property type="development level" value="Tbio"/>
</dbReference>
<dbReference type="PRO" id="PR:P23759"/>
<dbReference type="Proteomes" id="UP000005640">
    <property type="component" value="Chromosome 1"/>
</dbReference>
<dbReference type="RNAct" id="P23759">
    <property type="molecule type" value="protein"/>
</dbReference>
<dbReference type="Bgee" id="ENSG00000009709">
    <property type="expression patterns" value="Expressed in olfactory segment of nasal mucosa and 48 other cell types or tissues"/>
</dbReference>
<dbReference type="GO" id="GO:0000785">
    <property type="term" value="C:chromatin"/>
    <property type="evidence" value="ECO:0000247"/>
    <property type="project" value="NTNU_SB"/>
</dbReference>
<dbReference type="GO" id="GO:0005634">
    <property type="term" value="C:nucleus"/>
    <property type="evidence" value="ECO:0000250"/>
    <property type="project" value="UniProt"/>
</dbReference>
<dbReference type="GO" id="GO:0003700">
    <property type="term" value="F:DNA-binding transcription factor activity"/>
    <property type="evidence" value="ECO:0000314"/>
    <property type="project" value="UniProt"/>
</dbReference>
<dbReference type="GO" id="GO:0000981">
    <property type="term" value="F:DNA-binding transcription factor activity, RNA polymerase II-specific"/>
    <property type="evidence" value="ECO:0000247"/>
    <property type="project" value="NTNU_SB"/>
</dbReference>
<dbReference type="GO" id="GO:0000978">
    <property type="term" value="F:RNA polymerase II cis-regulatory region sequence-specific DNA binding"/>
    <property type="evidence" value="ECO:0000318"/>
    <property type="project" value="GO_Central"/>
</dbReference>
<dbReference type="GO" id="GO:1990837">
    <property type="term" value="F:sequence-specific double-stranded DNA binding"/>
    <property type="evidence" value="ECO:0000314"/>
    <property type="project" value="ARUK-UCL"/>
</dbReference>
<dbReference type="GO" id="GO:0009653">
    <property type="term" value="P:anatomical structure morphogenesis"/>
    <property type="evidence" value="ECO:0000304"/>
    <property type="project" value="ProtInc"/>
</dbReference>
<dbReference type="GO" id="GO:0051216">
    <property type="term" value="P:cartilage development"/>
    <property type="evidence" value="ECO:0007669"/>
    <property type="project" value="Ensembl"/>
</dbReference>
<dbReference type="GO" id="GO:0006338">
    <property type="term" value="P:chromatin remodeling"/>
    <property type="evidence" value="ECO:0007669"/>
    <property type="project" value="Ensembl"/>
</dbReference>
<dbReference type="GO" id="GO:0021904">
    <property type="term" value="P:dorsal/ventral neural tube patterning"/>
    <property type="evidence" value="ECO:0007669"/>
    <property type="project" value="Ensembl"/>
</dbReference>
<dbReference type="GO" id="GO:0048706">
    <property type="term" value="P:embryonic skeletal system development"/>
    <property type="evidence" value="ECO:0007669"/>
    <property type="project" value="Ensembl"/>
</dbReference>
<dbReference type="GO" id="GO:0060415">
    <property type="term" value="P:muscle tissue morphogenesis"/>
    <property type="evidence" value="ECO:0007669"/>
    <property type="project" value="Ensembl"/>
</dbReference>
<dbReference type="GO" id="GO:0043066">
    <property type="term" value="P:negative regulation of apoptotic process"/>
    <property type="evidence" value="ECO:0000304"/>
    <property type="project" value="ProtInc"/>
</dbReference>
<dbReference type="GO" id="GO:0007399">
    <property type="term" value="P:nervous system development"/>
    <property type="evidence" value="ECO:0000318"/>
    <property type="project" value="GO_Central"/>
</dbReference>
<dbReference type="GO" id="GO:0048663">
    <property type="term" value="P:neuron fate commitment"/>
    <property type="evidence" value="ECO:0007669"/>
    <property type="project" value="Ensembl"/>
</dbReference>
<dbReference type="GO" id="GO:2000288">
    <property type="term" value="P:positive regulation of myoblast proliferation"/>
    <property type="evidence" value="ECO:0007669"/>
    <property type="project" value="Ensembl"/>
</dbReference>
<dbReference type="GO" id="GO:0045944">
    <property type="term" value="P:positive regulation of transcription by RNA polymerase II"/>
    <property type="evidence" value="ECO:0007669"/>
    <property type="project" value="Ensembl"/>
</dbReference>
<dbReference type="GO" id="GO:0010453">
    <property type="term" value="P:regulation of cell fate commitment"/>
    <property type="evidence" value="ECO:0007669"/>
    <property type="project" value="Ensembl"/>
</dbReference>
<dbReference type="GO" id="GO:1902275">
    <property type="term" value="P:regulation of chromatin organization"/>
    <property type="evidence" value="ECO:0007669"/>
    <property type="project" value="Ensembl"/>
</dbReference>
<dbReference type="GO" id="GO:0006357">
    <property type="term" value="P:regulation of transcription by RNA polymerase II"/>
    <property type="evidence" value="ECO:0000318"/>
    <property type="project" value="GO_Central"/>
</dbReference>
<dbReference type="GO" id="GO:0014813">
    <property type="term" value="P:skeletal muscle satellite cell commitment"/>
    <property type="evidence" value="ECO:0007669"/>
    <property type="project" value="Ensembl"/>
</dbReference>
<dbReference type="GO" id="GO:0014816">
    <property type="term" value="P:skeletal muscle satellite cell differentiation"/>
    <property type="evidence" value="ECO:0000250"/>
    <property type="project" value="UniProtKB"/>
</dbReference>
<dbReference type="GO" id="GO:0043403">
    <property type="term" value="P:skeletal muscle tissue regeneration"/>
    <property type="evidence" value="ECO:0007669"/>
    <property type="project" value="Ensembl"/>
</dbReference>
<dbReference type="GO" id="GO:0021527">
    <property type="term" value="P:spinal cord association neuron differentiation"/>
    <property type="evidence" value="ECO:0007669"/>
    <property type="project" value="Ensembl"/>
</dbReference>
<dbReference type="GO" id="GO:0006366">
    <property type="term" value="P:transcription by RNA polymerase II"/>
    <property type="evidence" value="ECO:0007669"/>
    <property type="project" value="Ensembl"/>
</dbReference>
<dbReference type="CDD" id="cd00086">
    <property type="entry name" value="homeodomain"/>
    <property type="match status" value="1"/>
</dbReference>
<dbReference type="CDD" id="cd00131">
    <property type="entry name" value="PAX"/>
    <property type="match status" value="1"/>
</dbReference>
<dbReference type="FunFam" id="1.10.10.10:FF:000080">
    <property type="entry name" value="paired box protein Pax-3 isoform X2"/>
    <property type="match status" value="1"/>
</dbReference>
<dbReference type="FunFam" id="1.10.10.60:FF:000035">
    <property type="entry name" value="paired box protein Pax-3 isoform X2"/>
    <property type="match status" value="1"/>
</dbReference>
<dbReference type="FunFam" id="1.10.10.10:FF:000031">
    <property type="entry name" value="Paired box protein Pax-7"/>
    <property type="match status" value="1"/>
</dbReference>
<dbReference type="Gene3D" id="1.10.10.60">
    <property type="entry name" value="Homeodomain-like"/>
    <property type="match status" value="1"/>
</dbReference>
<dbReference type="Gene3D" id="1.10.10.10">
    <property type="entry name" value="Winged helix-like DNA-binding domain superfamily/Winged helix DNA-binding domain"/>
    <property type="match status" value="2"/>
</dbReference>
<dbReference type="InterPro" id="IPR001356">
    <property type="entry name" value="HD"/>
</dbReference>
<dbReference type="InterPro" id="IPR017970">
    <property type="entry name" value="Homeobox_CS"/>
</dbReference>
<dbReference type="InterPro" id="IPR009057">
    <property type="entry name" value="Homeodomain-like_sf"/>
</dbReference>
<dbReference type="InterPro" id="IPR003654">
    <property type="entry name" value="OAR_dom"/>
</dbReference>
<dbReference type="InterPro" id="IPR043182">
    <property type="entry name" value="PAIRED_DNA-bd_dom"/>
</dbReference>
<dbReference type="InterPro" id="IPR001523">
    <property type="entry name" value="Paired_dom"/>
</dbReference>
<dbReference type="InterPro" id="IPR022106">
    <property type="entry name" value="Pax7_C"/>
</dbReference>
<dbReference type="InterPro" id="IPR043565">
    <property type="entry name" value="PAX_fam"/>
</dbReference>
<dbReference type="InterPro" id="IPR036388">
    <property type="entry name" value="WH-like_DNA-bd_sf"/>
</dbReference>
<dbReference type="PANTHER" id="PTHR45636">
    <property type="entry name" value="PAIRED BOX PROTEIN PAX-6-RELATED-RELATED"/>
    <property type="match status" value="1"/>
</dbReference>
<dbReference type="PANTHER" id="PTHR45636:SF26">
    <property type="entry name" value="PAIRED BOX PROTEIN PAX-7"/>
    <property type="match status" value="1"/>
</dbReference>
<dbReference type="Pfam" id="PF00046">
    <property type="entry name" value="Homeodomain"/>
    <property type="match status" value="1"/>
</dbReference>
<dbReference type="Pfam" id="PF00292">
    <property type="entry name" value="PAX"/>
    <property type="match status" value="1"/>
</dbReference>
<dbReference type="Pfam" id="PF12360">
    <property type="entry name" value="Pax7"/>
    <property type="match status" value="1"/>
</dbReference>
<dbReference type="PRINTS" id="PR00027">
    <property type="entry name" value="PAIREDBOX"/>
</dbReference>
<dbReference type="SMART" id="SM00389">
    <property type="entry name" value="HOX"/>
    <property type="match status" value="1"/>
</dbReference>
<dbReference type="SMART" id="SM00351">
    <property type="entry name" value="PAX"/>
    <property type="match status" value="1"/>
</dbReference>
<dbReference type="SUPFAM" id="SSF46689">
    <property type="entry name" value="Homeodomain-like"/>
    <property type="match status" value="2"/>
</dbReference>
<dbReference type="PROSITE" id="PS00027">
    <property type="entry name" value="HOMEOBOX_1"/>
    <property type="match status" value="1"/>
</dbReference>
<dbReference type="PROSITE" id="PS50071">
    <property type="entry name" value="HOMEOBOX_2"/>
    <property type="match status" value="1"/>
</dbReference>
<dbReference type="PROSITE" id="PS50803">
    <property type="entry name" value="OAR"/>
    <property type="match status" value="1"/>
</dbReference>
<dbReference type="PROSITE" id="PS00034">
    <property type="entry name" value="PAIRED_1"/>
    <property type="match status" value="1"/>
</dbReference>
<dbReference type="PROSITE" id="PS51057">
    <property type="entry name" value="PAIRED_2"/>
    <property type="match status" value="1"/>
</dbReference>
<keyword id="KW-0007">Acetylation</keyword>
<keyword id="KW-0025">Alternative splicing</keyword>
<keyword id="KW-0160">Chromosomal rearrangement</keyword>
<keyword id="KW-0217">Developmental protein</keyword>
<keyword id="KW-0225">Disease variant</keyword>
<keyword id="KW-0238">DNA-binding</keyword>
<keyword id="KW-0371">Homeobox</keyword>
<keyword id="KW-0517">Myogenesis</keyword>
<keyword id="KW-0539">Nucleus</keyword>
<keyword id="KW-0563">Paired box</keyword>
<keyword id="KW-1267">Proteomics identification</keyword>
<keyword id="KW-0656">Proto-oncogene</keyword>
<keyword id="KW-1185">Reference proteome</keyword>
<keyword id="KW-0804">Transcription</keyword>
<keyword id="KW-0805">Transcription regulation</keyword>
<protein>
    <recommendedName>
        <fullName>Paired box protein Pax-7</fullName>
    </recommendedName>
    <alternativeName>
        <fullName>HuP1</fullName>
    </alternativeName>
</protein>